<feature type="chain" id="PRO_0000381303" description="Biotin synthase">
    <location>
        <begin position="1"/>
        <end position="331"/>
    </location>
</feature>
<feature type="domain" description="Radical SAM core" evidence="2">
    <location>
        <begin position="39"/>
        <end position="264"/>
    </location>
</feature>
<feature type="binding site" evidence="1">
    <location>
        <position position="54"/>
    </location>
    <ligand>
        <name>[4Fe-4S] cluster</name>
        <dbReference type="ChEBI" id="CHEBI:49883"/>
        <note>4Fe-4S-S-AdoMet</note>
    </ligand>
</feature>
<feature type="binding site" evidence="1">
    <location>
        <position position="58"/>
    </location>
    <ligand>
        <name>[4Fe-4S] cluster</name>
        <dbReference type="ChEBI" id="CHEBI:49883"/>
        <note>4Fe-4S-S-AdoMet</note>
    </ligand>
</feature>
<feature type="binding site" evidence="1">
    <location>
        <position position="61"/>
    </location>
    <ligand>
        <name>[4Fe-4S] cluster</name>
        <dbReference type="ChEBI" id="CHEBI:49883"/>
        <note>4Fe-4S-S-AdoMet</note>
    </ligand>
</feature>
<feature type="binding site" evidence="1">
    <location>
        <position position="98"/>
    </location>
    <ligand>
        <name>[2Fe-2S] cluster</name>
        <dbReference type="ChEBI" id="CHEBI:190135"/>
    </ligand>
</feature>
<feature type="binding site" evidence="1">
    <location>
        <position position="130"/>
    </location>
    <ligand>
        <name>[2Fe-2S] cluster</name>
        <dbReference type="ChEBI" id="CHEBI:190135"/>
    </ligand>
</feature>
<feature type="binding site" evidence="1">
    <location>
        <position position="190"/>
    </location>
    <ligand>
        <name>[2Fe-2S] cluster</name>
        <dbReference type="ChEBI" id="CHEBI:190135"/>
    </ligand>
</feature>
<feature type="binding site" evidence="1">
    <location>
        <position position="262"/>
    </location>
    <ligand>
        <name>[2Fe-2S] cluster</name>
        <dbReference type="ChEBI" id="CHEBI:190135"/>
    </ligand>
</feature>
<organism>
    <name type="scientific">Chlamydia pneumoniae</name>
    <name type="common">Chlamydophila pneumoniae</name>
    <dbReference type="NCBI Taxonomy" id="83558"/>
    <lineage>
        <taxon>Bacteria</taxon>
        <taxon>Pseudomonadati</taxon>
        <taxon>Chlamydiota</taxon>
        <taxon>Chlamydiia</taxon>
        <taxon>Chlamydiales</taxon>
        <taxon>Chlamydiaceae</taxon>
        <taxon>Chlamydia/Chlamydophila group</taxon>
        <taxon>Chlamydia</taxon>
    </lineage>
</organism>
<accession>Q9Z6L5</accession>
<accession>Q7AHW6</accession>
<accession>Q7BWK9</accession>
<accession>Q7DE82</accession>
<name>BIOB_CHLPN</name>
<keyword id="KW-0001">2Fe-2S</keyword>
<keyword id="KW-0004">4Fe-4S</keyword>
<keyword id="KW-0093">Biotin biosynthesis</keyword>
<keyword id="KW-0408">Iron</keyword>
<keyword id="KW-0411">Iron-sulfur</keyword>
<keyword id="KW-0479">Metal-binding</keyword>
<keyword id="KW-0949">S-adenosyl-L-methionine</keyword>
<keyword id="KW-0808">Transferase</keyword>
<dbReference type="EC" id="2.8.1.6" evidence="1"/>
<dbReference type="EMBL" id="AE001363">
    <property type="protein sequence ID" value="AAD19181.1"/>
    <property type="molecule type" value="Genomic_DNA"/>
</dbReference>
<dbReference type="EMBL" id="AE002161">
    <property type="protein sequence ID" value="AAF38605.1"/>
    <property type="molecule type" value="Genomic_DNA"/>
</dbReference>
<dbReference type="EMBL" id="AE009440">
    <property type="protein sequence ID" value="AAP99013.1"/>
    <property type="molecule type" value="Genomic_DNA"/>
</dbReference>
<dbReference type="EMBL" id="BA000008">
    <property type="protein sequence ID" value="BAA99251.1"/>
    <property type="molecule type" value="Genomic_DNA"/>
</dbReference>
<dbReference type="PIR" id="A86621">
    <property type="entry name" value="A86621"/>
</dbReference>
<dbReference type="PIR" id="H72004">
    <property type="entry name" value="H72004"/>
</dbReference>
<dbReference type="RefSeq" id="NP_225238.1">
    <property type="nucleotide sequence ID" value="NC_000922.1"/>
</dbReference>
<dbReference type="RefSeq" id="WP_010883677.1">
    <property type="nucleotide sequence ID" value="NZ_LN847257.1"/>
</dbReference>
<dbReference type="SMR" id="Q9Z6L5"/>
<dbReference type="STRING" id="406984.CPK_ORF00471"/>
<dbReference type="GeneID" id="45051102"/>
<dbReference type="KEGG" id="cpa:CP_0808"/>
<dbReference type="KEGG" id="cpj:bioB"/>
<dbReference type="KEGG" id="cpn:CPn_1044"/>
<dbReference type="KEGG" id="cpt:CpB1084"/>
<dbReference type="PATRIC" id="fig|115713.3.peg.1143"/>
<dbReference type="eggNOG" id="COG0502">
    <property type="taxonomic scope" value="Bacteria"/>
</dbReference>
<dbReference type="HOGENOM" id="CLU_033172_1_2_0"/>
<dbReference type="OrthoDB" id="9786826at2"/>
<dbReference type="UniPathway" id="UPA00078">
    <property type="reaction ID" value="UER00162"/>
</dbReference>
<dbReference type="Proteomes" id="UP000000583">
    <property type="component" value="Chromosome"/>
</dbReference>
<dbReference type="Proteomes" id="UP000000801">
    <property type="component" value="Chromosome"/>
</dbReference>
<dbReference type="GO" id="GO:0051537">
    <property type="term" value="F:2 iron, 2 sulfur cluster binding"/>
    <property type="evidence" value="ECO:0007669"/>
    <property type="project" value="UniProtKB-KW"/>
</dbReference>
<dbReference type="GO" id="GO:0051539">
    <property type="term" value="F:4 iron, 4 sulfur cluster binding"/>
    <property type="evidence" value="ECO:0007669"/>
    <property type="project" value="UniProtKB-KW"/>
</dbReference>
<dbReference type="GO" id="GO:0004076">
    <property type="term" value="F:biotin synthase activity"/>
    <property type="evidence" value="ECO:0007669"/>
    <property type="project" value="UniProtKB-UniRule"/>
</dbReference>
<dbReference type="GO" id="GO:0005506">
    <property type="term" value="F:iron ion binding"/>
    <property type="evidence" value="ECO:0007669"/>
    <property type="project" value="UniProtKB-UniRule"/>
</dbReference>
<dbReference type="GO" id="GO:0009102">
    <property type="term" value="P:biotin biosynthetic process"/>
    <property type="evidence" value="ECO:0007669"/>
    <property type="project" value="UniProtKB-UniRule"/>
</dbReference>
<dbReference type="CDD" id="cd01335">
    <property type="entry name" value="Radical_SAM"/>
    <property type="match status" value="1"/>
</dbReference>
<dbReference type="Gene3D" id="3.20.20.70">
    <property type="entry name" value="Aldolase class I"/>
    <property type="match status" value="1"/>
</dbReference>
<dbReference type="HAMAP" id="MF_01694">
    <property type="entry name" value="BioB"/>
    <property type="match status" value="1"/>
</dbReference>
<dbReference type="InterPro" id="IPR013785">
    <property type="entry name" value="Aldolase_TIM"/>
</dbReference>
<dbReference type="InterPro" id="IPR010722">
    <property type="entry name" value="BATS_dom"/>
</dbReference>
<dbReference type="InterPro" id="IPR002684">
    <property type="entry name" value="Biotin_synth/BioAB"/>
</dbReference>
<dbReference type="InterPro" id="IPR024177">
    <property type="entry name" value="Biotin_synthase"/>
</dbReference>
<dbReference type="InterPro" id="IPR006638">
    <property type="entry name" value="Elp3/MiaA/NifB-like_rSAM"/>
</dbReference>
<dbReference type="InterPro" id="IPR007197">
    <property type="entry name" value="rSAM"/>
</dbReference>
<dbReference type="NCBIfam" id="TIGR00433">
    <property type="entry name" value="bioB"/>
    <property type="match status" value="1"/>
</dbReference>
<dbReference type="PANTHER" id="PTHR22976">
    <property type="entry name" value="BIOTIN SYNTHASE"/>
    <property type="match status" value="1"/>
</dbReference>
<dbReference type="PANTHER" id="PTHR22976:SF2">
    <property type="entry name" value="BIOTIN SYNTHASE, MITOCHONDRIAL"/>
    <property type="match status" value="1"/>
</dbReference>
<dbReference type="Pfam" id="PF06968">
    <property type="entry name" value="BATS"/>
    <property type="match status" value="1"/>
</dbReference>
<dbReference type="Pfam" id="PF04055">
    <property type="entry name" value="Radical_SAM"/>
    <property type="match status" value="1"/>
</dbReference>
<dbReference type="PIRSF" id="PIRSF001619">
    <property type="entry name" value="Biotin_synth"/>
    <property type="match status" value="1"/>
</dbReference>
<dbReference type="SFLD" id="SFLDF00272">
    <property type="entry name" value="biotin_synthase"/>
    <property type="match status" value="1"/>
</dbReference>
<dbReference type="SFLD" id="SFLDG01278">
    <property type="entry name" value="biotin_synthase_like"/>
    <property type="match status" value="1"/>
</dbReference>
<dbReference type="SMART" id="SM00876">
    <property type="entry name" value="BATS"/>
    <property type="match status" value="1"/>
</dbReference>
<dbReference type="SMART" id="SM00729">
    <property type="entry name" value="Elp3"/>
    <property type="match status" value="1"/>
</dbReference>
<dbReference type="SUPFAM" id="SSF102114">
    <property type="entry name" value="Radical SAM enzymes"/>
    <property type="match status" value="1"/>
</dbReference>
<dbReference type="PROSITE" id="PS51918">
    <property type="entry name" value="RADICAL_SAM"/>
    <property type="match status" value="1"/>
</dbReference>
<evidence type="ECO:0000255" key="1">
    <source>
        <dbReference type="HAMAP-Rule" id="MF_01694"/>
    </source>
</evidence>
<evidence type="ECO:0000255" key="2">
    <source>
        <dbReference type="PROSITE-ProRule" id="PRU01266"/>
    </source>
</evidence>
<reference key="1">
    <citation type="journal article" date="1999" name="Nat. Genet.">
        <title>Comparative genomes of Chlamydia pneumoniae and C. trachomatis.</title>
        <authorList>
            <person name="Kalman S."/>
            <person name="Mitchell W.P."/>
            <person name="Marathe R."/>
            <person name="Lammel C.J."/>
            <person name="Fan J."/>
            <person name="Hyman R.W."/>
            <person name="Olinger L."/>
            <person name="Grimwood J."/>
            <person name="Davis R.W."/>
            <person name="Stephens R.S."/>
        </authorList>
    </citation>
    <scope>NUCLEOTIDE SEQUENCE [LARGE SCALE GENOMIC DNA]</scope>
    <source>
        <strain>CWL029</strain>
    </source>
</reference>
<reference key="2">
    <citation type="journal article" date="2000" name="Nucleic Acids Res.">
        <title>Comparison of whole genome sequences of Chlamydia pneumoniae J138 from Japan and CWL029 from USA.</title>
        <authorList>
            <person name="Shirai M."/>
            <person name="Hirakawa H."/>
            <person name="Kimoto M."/>
            <person name="Tabuchi M."/>
            <person name="Kishi F."/>
            <person name="Ouchi K."/>
            <person name="Shiba T."/>
            <person name="Ishii K."/>
            <person name="Hattori M."/>
            <person name="Kuhara S."/>
            <person name="Nakazawa T."/>
        </authorList>
    </citation>
    <scope>NUCLEOTIDE SEQUENCE [LARGE SCALE GENOMIC DNA]</scope>
    <source>
        <strain>J138</strain>
    </source>
</reference>
<reference key="3">
    <citation type="submission" date="2002-05" db="EMBL/GenBank/DDBJ databases">
        <title>The genome sequence of Chlamydia pneumoniae TW183 and comparison with other Chlamydia strains based on whole genome sequence analysis.</title>
        <authorList>
            <person name="Geng M.M."/>
            <person name="Schuhmacher A."/>
            <person name="Muehldorfer I."/>
            <person name="Bensch K.W."/>
            <person name="Schaefer K.P."/>
            <person name="Schneider S."/>
            <person name="Pohl T."/>
            <person name="Essig A."/>
            <person name="Marre R."/>
            <person name="Melchers K."/>
        </authorList>
    </citation>
    <scope>NUCLEOTIDE SEQUENCE [LARGE SCALE GENOMIC DNA]</scope>
    <source>
        <strain>TW-183</strain>
    </source>
</reference>
<reference key="4">
    <citation type="journal article" date="2000" name="Nucleic Acids Res.">
        <title>Genome sequences of Chlamydia trachomatis MoPn and Chlamydia pneumoniae AR39.</title>
        <authorList>
            <person name="Read T.D."/>
            <person name="Brunham R.C."/>
            <person name="Shen C."/>
            <person name="Gill S.R."/>
            <person name="Heidelberg J.F."/>
            <person name="White O."/>
            <person name="Hickey E.K."/>
            <person name="Peterson J.D."/>
            <person name="Utterback T.R."/>
            <person name="Berry K.J."/>
            <person name="Bass S."/>
            <person name="Linher K.D."/>
            <person name="Weidman J.F."/>
            <person name="Khouri H.M."/>
            <person name="Craven B."/>
            <person name="Bowman C."/>
            <person name="Dodson R.J."/>
            <person name="Gwinn M.L."/>
            <person name="Nelson W.C."/>
            <person name="DeBoy R.T."/>
            <person name="Kolonay J.F."/>
            <person name="McClarty G."/>
            <person name="Salzberg S.L."/>
            <person name="Eisen J.A."/>
            <person name="Fraser C.M."/>
        </authorList>
    </citation>
    <scope>NUCLEOTIDE SEQUENCE [LARGE SCALE GENOMIC DNA]</scope>
    <source>
        <strain>AR39</strain>
    </source>
</reference>
<sequence length="331" mass="37075">MREETVSWSLEDIREIYHTPVFELIHKANAILRSNFLHSELQTCYLISIKTGGCVEDCAYCAQSSRYHTHVTPEPMMKIVDVVERAKRAVELGATRVCLGAAWRNAKDDRYFDRVLAMVKSITDLGAEVCCALGMLSEEQAKKLYDAGLYAYNHNLDSSPEFYETIITTRSYEDRLNTLDVVNKSGISTCCGGIVGMGESEEDRIKLLHVLATRDHIPESVPVNLLWPIDGTPLQDQPPISFWEVLRTIATARVVFPRSMVRLAAGRAFLTVEQQTLCFLAGANSIFYGDKLLTVENNDIDEDAEMIKLLGLIPRPSFGIERGNPCYANNS</sequence>
<comment type="function">
    <text evidence="1">Catalyzes the conversion of dethiobiotin (DTB) to biotin by the insertion of a sulfur atom into dethiobiotin via a radical-based mechanism.</text>
</comment>
<comment type="catalytic activity">
    <reaction evidence="1">
        <text>(4R,5S)-dethiobiotin + (sulfur carrier)-SH + 2 reduced [2Fe-2S]-[ferredoxin] + 2 S-adenosyl-L-methionine = (sulfur carrier)-H + biotin + 2 5'-deoxyadenosine + 2 L-methionine + 2 oxidized [2Fe-2S]-[ferredoxin]</text>
        <dbReference type="Rhea" id="RHEA:22060"/>
        <dbReference type="Rhea" id="RHEA-COMP:10000"/>
        <dbReference type="Rhea" id="RHEA-COMP:10001"/>
        <dbReference type="Rhea" id="RHEA-COMP:14737"/>
        <dbReference type="Rhea" id="RHEA-COMP:14739"/>
        <dbReference type="ChEBI" id="CHEBI:17319"/>
        <dbReference type="ChEBI" id="CHEBI:29917"/>
        <dbReference type="ChEBI" id="CHEBI:33737"/>
        <dbReference type="ChEBI" id="CHEBI:33738"/>
        <dbReference type="ChEBI" id="CHEBI:57586"/>
        <dbReference type="ChEBI" id="CHEBI:57844"/>
        <dbReference type="ChEBI" id="CHEBI:59789"/>
        <dbReference type="ChEBI" id="CHEBI:64428"/>
        <dbReference type="ChEBI" id="CHEBI:149473"/>
        <dbReference type="EC" id="2.8.1.6"/>
    </reaction>
</comment>
<comment type="cofactor">
    <cofactor evidence="1">
        <name>[4Fe-4S] cluster</name>
        <dbReference type="ChEBI" id="CHEBI:49883"/>
    </cofactor>
    <text evidence="1">Binds 1 [4Fe-4S] cluster. The cluster is coordinated with 3 cysteines and an exchangeable S-adenosyl-L-methionine.</text>
</comment>
<comment type="cofactor">
    <cofactor evidence="1">
        <name>[2Fe-2S] cluster</name>
        <dbReference type="ChEBI" id="CHEBI:190135"/>
    </cofactor>
    <text evidence="1">Binds 1 [2Fe-2S] cluster. The cluster is coordinated with 3 cysteines and 1 arginine.</text>
</comment>
<comment type="pathway">
    <text evidence="1">Cofactor biosynthesis; biotin biosynthesis; biotin from 7,8-diaminononanoate: step 2/2.</text>
</comment>
<comment type="subunit">
    <text evidence="1">Homodimer.</text>
</comment>
<comment type="similarity">
    <text evidence="1">Belongs to the radical SAM superfamily. Biotin synthase family.</text>
</comment>
<proteinExistence type="inferred from homology"/>
<gene>
    <name evidence="1" type="primary">bioB</name>
    <name type="ordered locus">CPn_1044</name>
    <name type="ordered locus">CP_0808</name>
    <name type="ordered locus">CpB1084</name>
</gene>
<protein>
    <recommendedName>
        <fullName evidence="1">Biotin synthase</fullName>
        <ecNumber evidence="1">2.8.1.6</ecNumber>
    </recommendedName>
</protein>